<sequence>MAKILVFDEAARRALERGVNAVANAVKVTLGPRGRNVVLEKKFGSPTITKDGVTVAKEVELEDHLENIGAQLLKEVASKTNDVAGDGTTTATVLAQAIVREGLKNVAAGANPLALKRGIEKAVEAAVEKIKALAIPVEDRKAIEEVATISANDPEVGKLIADAMEKVGKEGIITVEESKSLETELKFVEGYQFDKGYISPYFVTNPETMEAVLEDAFILIVEKKVSNVRELLPILEQVAQTGKPLLIIAEDVEGEALATLVVNKLRGTLSVAAVKAPGFGDRRKEMLKDIAAVTGGTVISEELGFKLENATLSMLGRAERVRITKDETTIVGGKGKKEDIEARINGIKKELETTDSEYAREKLQERLAKLAGGVAVIRVGAATETELKEKKHRFEDALNATRAAVEEGIVPGGGVTLLRAISAVEELIKKLEGDEATGAKIVRRALEEPARQIAENAGYEGSVIVQQILAETKNPRYGFNAATGEFVDMVEAGIVDPAKVTRSALQNAASIGALILTTEAVVAEKPEKKESTPASAGAGDMDF</sequence>
<accession>P61490</accession>
<accession>P45746</accession>
<accession>Q60018</accession>
<accession>Q9RA44</accession>
<organism>
    <name type="scientific">Thermus thermophilus (strain ATCC BAA-163 / DSM 7039 / HB27)</name>
    <dbReference type="NCBI Taxonomy" id="262724"/>
    <lineage>
        <taxon>Bacteria</taxon>
        <taxon>Thermotogati</taxon>
        <taxon>Deinococcota</taxon>
        <taxon>Deinococci</taxon>
        <taxon>Thermales</taxon>
        <taxon>Thermaceae</taxon>
        <taxon>Thermus</taxon>
    </lineage>
</organism>
<name>CH60_THET2</name>
<dbReference type="EC" id="5.6.1.7" evidence="2"/>
<dbReference type="EMBL" id="AJ250409">
    <property type="protein sequence ID" value="CAB65482.1"/>
    <property type="molecule type" value="Genomic_DNA"/>
</dbReference>
<dbReference type="EMBL" id="AE017221">
    <property type="protein sequence ID" value="AAS82056.1"/>
    <property type="molecule type" value="Genomic_DNA"/>
</dbReference>
<dbReference type="RefSeq" id="WP_011174077.1">
    <property type="nucleotide sequence ID" value="NC_005835.1"/>
</dbReference>
<dbReference type="PDB" id="4V4O">
    <property type="method" value="X-ray"/>
    <property type="resolution" value="2.80 A"/>
    <property type="chains" value="A/B/C/D/E/F/G/H/I/J/K/L/M/N/a/b/c/d/e/f/g/h/i/j/k/l/m/n=1-543"/>
</dbReference>
<dbReference type="PDBsum" id="4V4O"/>
<dbReference type="SMR" id="P61490"/>
<dbReference type="GeneID" id="3168209"/>
<dbReference type="KEGG" id="tth:TT_C1714"/>
<dbReference type="eggNOG" id="COG0459">
    <property type="taxonomic scope" value="Bacteria"/>
</dbReference>
<dbReference type="HOGENOM" id="CLU_016503_3_0_0"/>
<dbReference type="OrthoDB" id="9766614at2"/>
<dbReference type="Proteomes" id="UP000000592">
    <property type="component" value="Chromosome"/>
</dbReference>
<dbReference type="GO" id="GO:0005737">
    <property type="term" value="C:cytoplasm"/>
    <property type="evidence" value="ECO:0007669"/>
    <property type="project" value="UniProtKB-SubCell"/>
</dbReference>
<dbReference type="GO" id="GO:0005524">
    <property type="term" value="F:ATP binding"/>
    <property type="evidence" value="ECO:0007669"/>
    <property type="project" value="UniProtKB-UniRule"/>
</dbReference>
<dbReference type="GO" id="GO:0140662">
    <property type="term" value="F:ATP-dependent protein folding chaperone"/>
    <property type="evidence" value="ECO:0007669"/>
    <property type="project" value="InterPro"/>
</dbReference>
<dbReference type="GO" id="GO:0016853">
    <property type="term" value="F:isomerase activity"/>
    <property type="evidence" value="ECO:0007669"/>
    <property type="project" value="UniProtKB-KW"/>
</dbReference>
<dbReference type="GO" id="GO:0051082">
    <property type="term" value="F:unfolded protein binding"/>
    <property type="evidence" value="ECO:0007669"/>
    <property type="project" value="UniProtKB-UniRule"/>
</dbReference>
<dbReference type="GO" id="GO:0042026">
    <property type="term" value="P:protein refolding"/>
    <property type="evidence" value="ECO:0007669"/>
    <property type="project" value="UniProtKB-UniRule"/>
</dbReference>
<dbReference type="CDD" id="cd03344">
    <property type="entry name" value="GroEL"/>
    <property type="match status" value="1"/>
</dbReference>
<dbReference type="FunFam" id="3.50.7.10:FF:000001">
    <property type="entry name" value="60 kDa chaperonin"/>
    <property type="match status" value="1"/>
</dbReference>
<dbReference type="Gene3D" id="3.50.7.10">
    <property type="entry name" value="GroEL"/>
    <property type="match status" value="1"/>
</dbReference>
<dbReference type="Gene3D" id="1.10.560.10">
    <property type="entry name" value="GroEL-like equatorial domain"/>
    <property type="match status" value="1"/>
</dbReference>
<dbReference type="Gene3D" id="3.30.260.10">
    <property type="entry name" value="TCP-1-like chaperonin intermediate domain"/>
    <property type="match status" value="1"/>
</dbReference>
<dbReference type="HAMAP" id="MF_00600">
    <property type="entry name" value="CH60"/>
    <property type="match status" value="1"/>
</dbReference>
<dbReference type="InterPro" id="IPR018370">
    <property type="entry name" value="Chaperonin_Cpn60_CS"/>
</dbReference>
<dbReference type="InterPro" id="IPR001844">
    <property type="entry name" value="Cpn60/GroEL"/>
</dbReference>
<dbReference type="InterPro" id="IPR002423">
    <property type="entry name" value="Cpn60/GroEL/TCP-1"/>
</dbReference>
<dbReference type="InterPro" id="IPR027409">
    <property type="entry name" value="GroEL-like_apical_dom_sf"/>
</dbReference>
<dbReference type="InterPro" id="IPR027413">
    <property type="entry name" value="GROEL-like_equatorial_sf"/>
</dbReference>
<dbReference type="InterPro" id="IPR027410">
    <property type="entry name" value="TCP-1-like_intermed_sf"/>
</dbReference>
<dbReference type="NCBIfam" id="TIGR02348">
    <property type="entry name" value="GroEL"/>
    <property type="match status" value="1"/>
</dbReference>
<dbReference type="NCBIfam" id="NF000592">
    <property type="entry name" value="PRK00013.1"/>
    <property type="match status" value="1"/>
</dbReference>
<dbReference type="NCBIfam" id="NF009487">
    <property type="entry name" value="PRK12849.1"/>
    <property type="match status" value="1"/>
</dbReference>
<dbReference type="NCBIfam" id="NF009488">
    <property type="entry name" value="PRK12850.1"/>
    <property type="match status" value="1"/>
</dbReference>
<dbReference type="NCBIfam" id="NF009489">
    <property type="entry name" value="PRK12851.1"/>
    <property type="match status" value="1"/>
</dbReference>
<dbReference type="PANTHER" id="PTHR45633">
    <property type="entry name" value="60 KDA HEAT SHOCK PROTEIN, MITOCHONDRIAL"/>
    <property type="match status" value="1"/>
</dbReference>
<dbReference type="Pfam" id="PF00118">
    <property type="entry name" value="Cpn60_TCP1"/>
    <property type="match status" value="1"/>
</dbReference>
<dbReference type="PRINTS" id="PR00298">
    <property type="entry name" value="CHAPERONIN60"/>
</dbReference>
<dbReference type="SUPFAM" id="SSF52029">
    <property type="entry name" value="GroEL apical domain-like"/>
    <property type="match status" value="1"/>
</dbReference>
<dbReference type="SUPFAM" id="SSF48592">
    <property type="entry name" value="GroEL equatorial domain-like"/>
    <property type="match status" value="1"/>
</dbReference>
<dbReference type="SUPFAM" id="SSF54849">
    <property type="entry name" value="GroEL-intermediate domain like"/>
    <property type="match status" value="1"/>
</dbReference>
<dbReference type="PROSITE" id="PS00296">
    <property type="entry name" value="CHAPERONINS_CPN60"/>
    <property type="match status" value="1"/>
</dbReference>
<reference key="1">
    <citation type="submission" date="1999-10" db="EMBL/GenBank/DDBJ databases">
        <title>Characterization of the cpn10-cpn60 chaperonine from Thermus thermophilus HB27.</title>
        <authorList>
            <person name="Boskocik J."/>
            <person name="Moreno R."/>
            <person name="Valpuesta J.M."/>
            <person name="Berenguer J."/>
        </authorList>
    </citation>
    <scope>NUCLEOTIDE SEQUENCE [GENOMIC DNA]</scope>
</reference>
<reference key="2">
    <citation type="journal article" date="2004" name="Nat. Biotechnol.">
        <title>The genome sequence of the extreme thermophile Thermus thermophilus.</title>
        <authorList>
            <person name="Henne A."/>
            <person name="Brueggemann H."/>
            <person name="Raasch C."/>
            <person name="Wiezer A."/>
            <person name="Hartsch T."/>
            <person name="Liesegang H."/>
            <person name="Johann A."/>
            <person name="Lienard T."/>
            <person name="Gohl O."/>
            <person name="Martinez-Arias R."/>
            <person name="Jacobi C."/>
            <person name="Starkuviene V."/>
            <person name="Schlenczeck S."/>
            <person name="Dencker S."/>
            <person name="Huber R."/>
            <person name="Klenk H.-P."/>
            <person name="Kramer W."/>
            <person name="Merkl R."/>
            <person name="Gottschalk G."/>
            <person name="Fritz H.-J."/>
        </authorList>
    </citation>
    <scope>NUCLEOTIDE SEQUENCE [LARGE SCALE GENOMIC DNA]</scope>
    <source>
        <strain>ATCC BAA-163 / DSM 7039 / HB27</strain>
    </source>
</reference>
<reference key="3">
    <citation type="journal article" date="2004" name="Structure">
        <title>Crystal structure of the native chaperonin complex from Thermus thermophilus revealed unexpected asymmetry at the cis-cavity.</title>
        <authorList>
            <person name="Shimamura T."/>
            <person name="Koike-Takeshita A."/>
            <person name="Yokoyama K."/>
            <person name="Masui R."/>
            <person name="Murai N."/>
            <person name="Yoshida M."/>
            <person name="Taguchi H."/>
            <person name="Iwata S."/>
        </authorList>
    </citation>
    <scope>X-RAY CRYSTALLOGRAPHY (2.8 ANGSTROMS)</scope>
    <scope>SUBUNIT</scope>
</reference>
<feature type="initiator methionine" description="Removed" evidence="1">
    <location>
        <position position="1"/>
    </location>
</feature>
<feature type="chain" id="PRO_0000063581" description="Chaperonin GroEL">
    <location>
        <begin position="2"/>
        <end position="543"/>
    </location>
</feature>
<feature type="region of interest" description="Disordered" evidence="3">
    <location>
        <begin position="524"/>
        <end position="543"/>
    </location>
</feature>
<feature type="binding site" evidence="2">
    <location>
        <begin position="29"/>
        <end position="32"/>
    </location>
    <ligand>
        <name>ATP</name>
        <dbReference type="ChEBI" id="CHEBI:30616"/>
    </ligand>
</feature>
<feature type="binding site" evidence="2">
    <location>
        <position position="50"/>
    </location>
    <ligand>
        <name>ATP</name>
        <dbReference type="ChEBI" id="CHEBI:30616"/>
    </ligand>
</feature>
<feature type="binding site" evidence="2">
    <location>
        <begin position="86"/>
        <end position="90"/>
    </location>
    <ligand>
        <name>ATP</name>
        <dbReference type="ChEBI" id="CHEBI:30616"/>
    </ligand>
</feature>
<feature type="binding site" evidence="2">
    <location>
        <position position="413"/>
    </location>
    <ligand>
        <name>ATP</name>
        <dbReference type="ChEBI" id="CHEBI:30616"/>
    </ligand>
</feature>
<feature type="binding site" evidence="2">
    <location>
        <begin position="480"/>
        <end position="482"/>
    </location>
    <ligand>
        <name>ATP</name>
        <dbReference type="ChEBI" id="CHEBI:30616"/>
    </ligand>
</feature>
<feature type="binding site" evidence="2">
    <location>
        <position position="496"/>
    </location>
    <ligand>
        <name>ATP</name>
        <dbReference type="ChEBI" id="CHEBI:30616"/>
    </ligand>
</feature>
<feature type="sequence conflict" description="In Ref. 1; CAB65482." evidence="5" ref="1">
    <original>L</original>
    <variation>P</variation>
    <location>
        <position position="133"/>
    </location>
</feature>
<feature type="sequence conflict" description="In Ref. 1; CAB65482." evidence="5" ref="1">
    <original>E</original>
    <variation>K</variation>
    <location>
        <position position="222"/>
    </location>
</feature>
<feature type="strand" evidence="6">
    <location>
        <begin position="3"/>
        <end position="7"/>
    </location>
</feature>
<feature type="helix" evidence="6">
    <location>
        <begin position="8"/>
        <end position="26"/>
    </location>
</feature>
<feature type="helix" evidence="6">
    <location>
        <begin position="27"/>
        <end position="29"/>
    </location>
</feature>
<feature type="strand" evidence="6">
    <location>
        <begin position="36"/>
        <end position="39"/>
    </location>
</feature>
<feature type="strand" evidence="6">
    <location>
        <begin position="42"/>
        <end position="45"/>
    </location>
</feature>
<feature type="strand" evidence="6">
    <location>
        <begin position="47"/>
        <end position="49"/>
    </location>
</feature>
<feature type="helix" evidence="6">
    <location>
        <begin position="52"/>
        <end position="58"/>
    </location>
</feature>
<feature type="helix" evidence="6">
    <location>
        <begin position="64"/>
        <end position="84"/>
    </location>
</feature>
<feature type="helix" evidence="6">
    <location>
        <begin position="88"/>
        <end position="107"/>
    </location>
</feature>
<feature type="helix" evidence="6">
    <location>
        <begin position="112"/>
        <end position="132"/>
    </location>
</feature>
<feature type="helix" evidence="6">
    <location>
        <begin position="140"/>
        <end position="151"/>
    </location>
</feature>
<feature type="helix" evidence="6">
    <location>
        <begin position="154"/>
        <end position="165"/>
    </location>
</feature>
<feature type="strand" evidence="6">
    <location>
        <begin position="171"/>
        <end position="177"/>
    </location>
</feature>
<feature type="strand" evidence="6">
    <location>
        <begin position="179"/>
        <end position="182"/>
    </location>
</feature>
<feature type="strand" evidence="6">
    <location>
        <begin position="184"/>
        <end position="188"/>
    </location>
</feature>
<feature type="strand" evidence="6">
    <location>
        <begin position="190"/>
        <end position="194"/>
    </location>
</feature>
<feature type="strand" evidence="6">
    <location>
        <begin position="197"/>
        <end position="199"/>
    </location>
</feature>
<feature type="helix" evidence="6">
    <location>
        <begin position="200"/>
        <end position="202"/>
    </location>
</feature>
<feature type="turn" evidence="6">
    <location>
        <begin position="206"/>
        <end position="209"/>
    </location>
</feature>
<feature type="strand" evidence="6">
    <location>
        <begin position="213"/>
        <end position="223"/>
    </location>
</feature>
<feature type="helix" evidence="6">
    <location>
        <begin position="228"/>
        <end position="239"/>
    </location>
</feature>
<feature type="strand" evidence="6">
    <location>
        <begin position="245"/>
        <end position="250"/>
    </location>
</feature>
<feature type="helix" evidence="6">
    <location>
        <begin position="254"/>
        <end position="266"/>
    </location>
</feature>
<feature type="strand" evidence="6">
    <location>
        <begin position="271"/>
        <end position="275"/>
    </location>
</feature>
<feature type="strand" evidence="6">
    <location>
        <begin position="277"/>
        <end position="279"/>
    </location>
</feature>
<feature type="helix" evidence="6">
    <location>
        <begin position="280"/>
        <end position="294"/>
    </location>
</feature>
<feature type="turn" evidence="6">
    <location>
        <begin position="301"/>
        <end position="303"/>
    </location>
</feature>
<feature type="helix" evidence="6">
    <location>
        <begin position="307"/>
        <end position="309"/>
    </location>
</feature>
<feature type="helix" evidence="6">
    <location>
        <begin position="312"/>
        <end position="314"/>
    </location>
</feature>
<feature type="strand" evidence="6">
    <location>
        <begin position="316"/>
        <end position="323"/>
    </location>
</feature>
<feature type="strand" evidence="6">
    <location>
        <begin position="328"/>
        <end position="333"/>
    </location>
</feature>
<feature type="helix" evidence="6">
    <location>
        <begin position="337"/>
        <end position="351"/>
    </location>
</feature>
<feature type="helix" evidence="6">
    <location>
        <begin position="357"/>
        <end position="370"/>
    </location>
</feature>
<feature type="strand" evidence="6">
    <location>
        <begin position="374"/>
        <end position="379"/>
    </location>
</feature>
<feature type="helix" evidence="6">
    <location>
        <begin position="384"/>
        <end position="407"/>
    </location>
</feature>
<feature type="strand" evidence="6">
    <location>
        <begin position="409"/>
        <end position="411"/>
    </location>
</feature>
<feature type="turn" evidence="6">
    <location>
        <begin position="412"/>
        <end position="414"/>
    </location>
</feature>
<feature type="helix" evidence="6">
    <location>
        <begin position="415"/>
        <end position="428"/>
    </location>
</feature>
<feature type="helix" evidence="6">
    <location>
        <begin position="433"/>
        <end position="445"/>
    </location>
</feature>
<feature type="helix" evidence="6">
    <location>
        <begin position="448"/>
        <end position="456"/>
    </location>
</feature>
<feature type="helix" evidence="6">
    <location>
        <begin position="461"/>
        <end position="470"/>
    </location>
</feature>
<feature type="strand" evidence="6">
    <location>
        <begin position="477"/>
        <end position="479"/>
    </location>
</feature>
<feature type="turn" evidence="6">
    <location>
        <begin position="481"/>
        <end position="483"/>
    </location>
</feature>
<feature type="strand" evidence="6">
    <location>
        <begin position="486"/>
        <end position="488"/>
    </location>
</feature>
<feature type="turn" evidence="6">
    <location>
        <begin position="489"/>
        <end position="493"/>
    </location>
</feature>
<feature type="strand" evidence="6">
    <location>
        <begin position="495"/>
        <end position="497"/>
    </location>
</feature>
<feature type="helix" evidence="6">
    <location>
        <begin position="498"/>
        <end position="516"/>
    </location>
</feature>
<feature type="strand" evidence="6">
    <location>
        <begin position="518"/>
        <end position="524"/>
    </location>
</feature>
<keyword id="KW-0002">3D-structure</keyword>
<keyword id="KW-0067">ATP-binding</keyword>
<keyword id="KW-0143">Chaperone</keyword>
<keyword id="KW-0963">Cytoplasm</keyword>
<keyword id="KW-0413">Isomerase</keyword>
<keyword id="KW-0547">Nucleotide-binding</keyword>
<gene>
    <name evidence="2" type="primary">groEL</name>
    <name type="synonym">cpnL</name>
    <name type="synonym">groE</name>
    <name evidence="2" type="synonym">groL</name>
    <name type="synonym">hsp60</name>
    <name type="synonym">mopA</name>
    <name type="ordered locus">TT_C1714</name>
</gene>
<proteinExistence type="evidence at protein level"/>
<comment type="function">
    <text evidence="2">Together with its co-chaperonin GroES, plays an essential role in assisting protein folding. The GroEL-GroES system forms a nano-cage that allows encapsulation of the non-native substrate proteins and provides a physical environment optimized to promote and accelerate protein folding.</text>
</comment>
<comment type="catalytic activity">
    <reaction evidence="2">
        <text>ATP + H2O + a folded polypeptide = ADP + phosphate + an unfolded polypeptide.</text>
        <dbReference type="EC" id="5.6.1.7"/>
    </reaction>
</comment>
<comment type="subunit">
    <text evidence="2 4">Forms a cylinder of 14 subunits composed of two heptameric rings stacked back-to-back. Interacts with the co-chaperonin GroES.</text>
</comment>
<comment type="subcellular location">
    <subcellularLocation>
        <location evidence="2">Cytoplasm</location>
    </subcellularLocation>
</comment>
<comment type="similarity">
    <text evidence="2">Belongs to the chaperonin (HSP60) family.</text>
</comment>
<protein>
    <recommendedName>
        <fullName evidence="2">Chaperonin GroEL</fullName>
        <ecNumber evidence="2">5.6.1.7</ecNumber>
    </recommendedName>
    <alternativeName>
        <fullName evidence="2">60 kDa chaperonin</fullName>
    </alternativeName>
    <alternativeName>
        <fullName evidence="2">Chaperonin-60</fullName>
        <shortName evidence="2">Cpn60</shortName>
    </alternativeName>
    <alternativeName>
        <fullName>Heat shock protein 60</fullName>
    </alternativeName>
</protein>
<evidence type="ECO:0000250" key="1"/>
<evidence type="ECO:0000255" key="2">
    <source>
        <dbReference type="HAMAP-Rule" id="MF_00600"/>
    </source>
</evidence>
<evidence type="ECO:0000256" key="3">
    <source>
        <dbReference type="SAM" id="MobiDB-lite"/>
    </source>
</evidence>
<evidence type="ECO:0000269" key="4">
    <source>
    </source>
</evidence>
<evidence type="ECO:0000305" key="5"/>
<evidence type="ECO:0007829" key="6">
    <source>
        <dbReference type="PDB" id="4V4O"/>
    </source>
</evidence>